<feature type="chain" id="PRO_0000408788" description="Restriction of telomere capping protein 1">
    <location>
        <begin position="1"/>
        <end position="1313"/>
    </location>
</feature>
<feature type="repeat" description="WD 1">
    <location>
        <begin position="180"/>
        <end position="221"/>
    </location>
</feature>
<feature type="repeat" description="WD 2">
    <location>
        <begin position="229"/>
        <end position="269"/>
    </location>
</feature>
<feature type="repeat" description="WD 3">
    <location>
        <begin position="339"/>
        <end position="378"/>
    </location>
</feature>
<feature type="repeat" description="WD 4">
    <location>
        <begin position="442"/>
        <end position="484"/>
    </location>
</feature>
<feature type="repeat" description="WD 5">
    <location>
        <begin position="711"/>
        <end position="752"/>
    </location>
</feature>
<feature type="repeat" description="WD 6">
    <location>
        <begin position="795"/>
        <end position="837"/>
    </location>
</feature>
<feature type="repeat" description="WD 7">
    <location>
        <begin position="1100"/>
        <end position="1143"/>
    </location>
</feature>
<feature type="repeat" description="WD 8">
    <location>
        <begin position="1190"/>
        <end position="1229"/>
    </location>
</feature>
<feature type="zinc finger region" description="RING-type; degenerate" evidence="2">
    <location>
        <begin position="1267"/>
        <end position="1309"/>
    </location>
</feature>
<feature type="region of interest" description="Disordered" evidence="3">
    <location>
        <begin position="1"/>
        <end position="22"/>
    </location>
</feature>
<feature type="region of interest" description="Disordered" evidence="3">
    <location>
        <begin position="38"/>
        <end position="83"/>
    </location>
</feature>
<feature type="compositionally biased region" description="Polar residues" evidence="3">
    <location>
        <begin position="1"/>
        <end position="17"/>
    </location>
</feature>
<feature type="compositionally biased region" description="Low complexity" evidence="3">
    <location>
        <begin position="57"/>
        <end position="69"/>
    </location>
</feature>
<feature type="compositionally biased region" description="Basic and acidic residues" evidence="3">
    <location>
        <begin position="70"/>
        <end position="83"/>
    </location>
</feature>
<organism>
    <name type="scientific">Vanderwaltozyma polyspora (strain ATCC 22028 / DSM 70294 / BCRC 21397 / CBS 2163 / NBRC 10782 / NRRL Y-8283 / UCD 57-17)</name>
    <name type="common">Kluyveromyces polysporus</name>
    <dbReference type="NCBI Taxonomy" id="436907"/>
    <lineage>
        <taxon>Eukaryota</taxon>
        <taxon>Fungi</taxon>
        <taxon>Dikarya</taxon>
        <taxon>Ascomycota</taxon>
        <taxon>Saccharomycotina</taxon>
        <taxon>Saccharomycetes</taxon>
        <taxon>Saccharomycetales</taxon>
        <taxon>Saccharomycetaceae</taxon>
        <taxon>Vanderwaltozyma</taxon>
    </lineage>
</organism>
<sequence length="1313" mass="147070">MSNYSCPRTHNKSNMSGRNEVKPISFSRGSFQIHHYSNSIHSPSLDGSPRQNFSQKYSFGSINSSNSSYDRSRDPSSVEQQLMREKSQALLKRKSSPMPKSSGLLYSTHTNKELSSIDKINDPSSNALICAGKAHLGYYKFSSNDNNKITLVHEFTQGFSSGSSQLNSLNPNLNKRRRQIKLSTIADVKSGFQKYNNYIAVCNNSTIISIYDINKNDNIDNPLVTSFSEHSRAVNSFDFNMTQTSLLISGGQDGQIKIWDLRSNSLSGSNKPDLNINAASDSIRDVKWMPGYNFSSFNQSYDGKQTGNSEYKFASIHDSGLLLKFDIRQPNQVEKKINAHTGPGLCLNWHPNQDYIATGGRDGKCCIWYIGDVVNDAPVTSLGSMTPNTLHTSNVNYYQSNATSLALPEMTINTGFPVTKLKFRPAYEKNVMDSLLAISSMGEEAEVNIYSLCRKFIPKHVLLTTSPSQGLVWWDKSLIFNTDRSNRINGWDIDLEPTVLDNLPKALATWRDIDGNGLLVIDQDSGTYTANEEYIPLVFDKRRRQSHRLLNPSINDNNSITKTKYLDSIKKANSNTIISPTSVEKTGNIKQPNLHSNKSIIGMTSPMYMTQFMPPTNSPSPLNEPLEFKGIQSPLIVALDFPHILNNMRLSKITSKKHLSKSSDIAAIKESPIQVFQYLARELEFSFSKDRKLDSRSSIIKRKSISDDSGSQVDVIKKIGFTDTTKWTNLINRKTDGEIAEKSSDRISALSTSSESIKNDIDEKSEHSKNNAYLNLEKKLSHGTHGMPEDAIEAQHKVDILIELVTICSHNASVYSYIDDVPNFKIWTLIKDSLLWDLKDITGIEEAINSNDSIEIKDKFQYFENLDHERALKNSSSQTQFSDIPSEIESFVTENPEALTSASLELDNDIEEGTKESKRPISNLQQQLKAENTAVMDTPSDVFVTATTDGGHFRDNSKVTRDENKIETNDNTNLLNIGKVNTENAIKIDSESVIEDVAPGSKSIEIPTLTRGRTRTSFIDTFMTNPLHNMERPDRSLLLAQDSAASLNDQSSPISKVSSIKSSSNVPHSLNSMIKLSQGKMHSRTRSIGKSPIKLSGFLSPKERSLSLPLENILKKNKSAEKVAHNDQFRPPWETGKLLKQLFNQAVETGNILLAINIITLFQDLYNITTIDVVKSSLLQFVEILHRYELFEIATALLKYCSWNNILEGNGGNSTVQLFCDKCGKLIVNEFSKTNFNEELKRTGNKDSMKKFGYWYCDACKKPNSLCVLCEKPMKKLVMCVLACGHEGHFQCLRDWFLNEGMNECPAGDIQVI</sequence>
<gene>
    <name type="primary">RTC1</name>
    <name type="ORF">Kpol_1038p20</name>
</gene>
<dbReference type="EMBL" id="DS480467">
    <property type="protein sequence ID" value="EDO15313.1"/>
    <property type="molecule type" value="Genomic_DNA"/>
</dbReference>
<dbReference type="RefSeq" id="XP_001643171.1">
    <property type="nucleotide sequence ID" value="XM_001643121.1"/>
</dbReference>
<dbReference type="SMR" id="A7TR10"/>
<dbReference type="FunCoup" id="A7TR10">
    <property type="interactions" value="139"/>
</dbReference>
<dbReference type="STRING" id="436907.A7TR10"/>
<dbReference type="GeneID" id="5543372"/>
<dbReference type="KEGG" id="vpo:Kpol_1038p20"/>
<dbReference type="eggNOG" id="KOG0269">
    <property type="taxonomic scope" value="Eukaryota"/>
</dbReference>
<dbReference type="HOGENOM" id="CLU_008512_0_0_1"/>
<dbReference type="InParanoid" id="A7TR10"/>
<dbReference type="OMA" id="GRDGKCC"/>
<dbReference type="OrthoDB" id="60955at2759"/>
<dbReference type="PhylomeDB" id="A7TR10"/>
<dbReference type="Proteomes" id="UP000000267">
    <property type="component" value="Unassembled WGS sequence"/>
</dbReference>
<dbReference type="GO" id="GO:0005829">
    <property type="term" value="C:cytosol"/>
    <property type="evidence" value="ECO:0007669"/>
    <property type="project" value="TreeGrafter"/>
</dbReference>
<dbReference type="GO" id="GO:0061700">
    <property type="term" value="C:GATOR2 complex"/>
    <property type="evidence" value="ECO:0007669"/>
    <property type="project" value="TreeGrafter"/>
</dbReference>
<dbReference type="GO" id="GO:0005774">
    <property type="term" value="C:vacuolar membrane"/>
    <property type="evidence" value="ECO:0007669"/>
    <property type="project" value="TreeGrafter"/>
</dbReference>
<dbReference type="GO" id="GO:0008270">
    <property type="term" value="F:zinc ion binding"/>
    <property type="evidence" value="ECO:0007669"/>
    <property type="project" value="UniProtKB-KW"/>
</dbReference>
<dbReference type="GO" id="GO:0016239">
    <property type="term" value="P:positive regulation of macroautophagy"/>
    <property type="evidence" value="ECO:0007669"/>
    <property type="project" value="TreeGrafter"/>
</dbReference>
<dbReference type="GO" id="GO:1904263">
    <property type="term" value="P:positive regulation of TORC1 signaling"/>
    <property type="evidence" value="ECO:0007669"/>
    <property type="project" value="EnsemblFungi"/>
</dbReference>
<dbReference type="Gene3D" id="2.130.10.10">
    <property type="entry name" value="YVTN repeat-like/Quinoprotein amine dehydrogenase"/>
    <property type="match status" value="2"/>
</dbReference>
<dbReference type="InterPro" id="IPR015943">
    <property type="entry name" value="WD40/YVTN_repeat-like_dom_sf"/>
</dbReference>
<dbReference type="InterPro" id="IPR019775">
    <property type="entry name" value="WD40_repeat_CS"/>
</dbReference>
<dbReference type="InterPro" id="IPR036322">
    <property type="entry name" value="WD40_repeat_dom_sf"/>
</dbReference>
<dbReference type="InterPro" id="IPR001680">
    <property type="entry name" value="WD40_rpt"/>
</dbReference>
<dbReference type="InterPro" id="IPR037590">
    <property type="entry name" value="WDR24"/>
</dbReference>
<dbReference type="InterPro" id="IPR049566">
    <property type="entry name" value="WDR59_RTC1-like_RING_Znf"/>
</dbReference>
<dbReference type="InterPro" id="IPR001841">
    <property type="entry name" value="Znf_RING"/>
</dbReference>
<dbReference type="PANTHER" id="PTHR46200">
    <property type="entry name" value="GATOR COMPLEX PROTEIN WDR24"/>
    <property type="match status" value="1"/>
</dbReference>
<dbReference type="PANTHER" id="PTHR46200:SF1">
    <property type="entry name" value="GATOR COMPLEX PROTEIN WDR24"/>
    <property type="match status" value="1"/>
</dbReference>
<dbReference type="Pfam" id="PF00400">
    <property type="entry name" value="WD40"/>
    <property type="match status" value="2"/>
</dbReference>
<dbReference type="Pfam" id="PF17120">
    <property type="entry name" value="zf-RING_16"/>
    <property type="match status" value="1"/>
</dbReference>
<dbReference type="SMART" id="SM00320">
    <property type="entry name" value="WD40"/>
    <property type="match status" value="3"/>
</dbReference>
<dbReference type="SUPFAM" id="SSF50978">
    <property type="entry name" value="WD40 repeat-like"/>
    <property type="match status" value="1"/>
</dbReference>
<dbReference type="PROSITE" id="PS00678">
    <property type="entry name" value="WD_REPEATS_1"/>
    <property type="match status" value="1"/>
</dbReference>
<dbReference type="PROSITE" id="PS50082">
    <property type="entry name" value="WD_REPEATS_2"/>
    <property type="match status" value="2"/>
</dbReference>
<dbReference type="PROSITE" id="PS50294">
    <property type="entry name" value="WD_REPEATS_REGION"/>
    <property type="match status" value="2"/>
</dbReference>
<dbReference type="PROSITE" id="PS50089">
    <property type="entry name" value="ZF_RING_2"/>
    <property type="match status" value="1"/>
</dbReference>
<proteinExistence type="inferred from homology"/>
<accession>A7TR10</accession>
<comment type="function">
    <text evidence="1">May be involved in a process influencing telomere capping.</text>
</comment>
<comment type="subcellular location">
    <subcellularLocation>
        <location evidence="1">Vacuole</location>
    </subcellularLocation>
</comment>
<comment type="similarity">
    <text evidence="4">Belongs to the WD repeat RTC1 family.</text>
</comment>
<evidence type="ECO:0000250" key="1"/>
<evidence type="ECO:0000255" key="2">
    <source>
        <dbReference type="PROSITE-ProRule" id="PRU00175"/>
    </source>
</evidence>
<evidence type="ECO:0000256" key="3">
    <source>
        <dbReference type="SAM" id="MobiDB-lite"/>
    </source>
</evidence>
<evidence type="ECO:0000305" key="4"/>
<keyword id="KW-0479">Metal-binding</keyword>
<keyword id="KW-1185">Reference proteome</keyword>
<keyword id="KW-0677">Repeat</keyword>
<keyword id="KW-0926">Vacuole</keyword>
<keyword id="KW-0853">WD repeat</keyword>
<keyword id="KW-0862">Zinc</keyword>
<keyword id="KW-0863">Zinc-finger</keyword>
<protein>
    <recommendedName>
        <fullName>Restriction of telomere capping protein 1</fullName>
    </recommendedName>
</protein>
<name>RTC1_VANPO</name>
<reference key="1">
    <citation type="journal article" date="2007" name="Proc. Natl. Acad. Sci. U.S.A.">
        <title>Independent sorting-out of thousands of duplicated gene pairs in two yeast species descended from a whole-genome duplication.</title>
        <authorList>
            <person name="Scannell D.R."/>
            <person name="Frank A.C."/>
            <person name="Conant G.C."/>
            <person name="Byrne K.P."/>
            <person name="Woolfit M."/>
            <person name="Wolfe K.H."/>
        </authorList>
    </citation>
    <scope>NUCLEOTIDE SEQUENCE [LARGE SCALE GENOMIC DNA]</scope>
    <source>
        <strain>ATCC 22028 / DSM 70294 / BCRC 21397 / CBS 2163 / NBRC 10782 / NRRL Y-8283 / UCD 57-17</strain>
    </source>
</reference>